<name>KAPR_YEAST</name>
<proteinExistence type="evidence at protein level"/>
<dbReference type="EMBL" id="M15756">
    <property type="protein sequence ID" value="AAA34468.1"/>
    <property type="molecule type" value="Genomic_DNA"/>
</dbReference>
<dbReference type="EMBL" id="M17223">
    <property type="protein sequence ID" value="AAA66934.1"/>
    <property type="molecule type" value="Genomic_DNA"/>
</dbReference>
<dbReference type="EMBL" id="X05051">
    <property type="protein sequence ID" value="CAA28726.1"/>
    <property type="molecule type" value="Genomic_DNA"/>
</dbReference>
<dbReference type="EMBL" id="Z46861">
    <property type="protein sequence ID" value="CAA86918.1"/>
    <property type="molecule type" value="Genomic_DNA"/>
</dbReference>
<dbReference type="EMBL" id="AY558087">
    <property type="protein sequence ID" value="AAS56413.1"/>
    <property type="molecule type" value="Genomic_DNA"/>
</dbReference>
<dbReference type="EMBL" id="BK006942">
    <property type="protein sequence ID" value="DAA08515.1"/>
    <property type="molecule type" value="Genomic_DNA"/>
</dbReference>
<dbReference type="PIR" id="A25868">
    <property type="entry name" value="OKBYRC"/>
</dbReference>
<dbReference type="RefSeq" id="NP_012231.1">
    <property type="nucleotide sequence ID" value="NM_001179383.1"/>
</dbReference>
<dbReference type="PDB" id="3OF1">
    <property type="method" value="X-ray"/>
    <property type="resolution" value="2.21 A"/>
    <property type="chains" value="A=171-416"/>
</dbReference>
<dbReference type="PDB" id="6XQK">
    <property type="method" value="X-ray"/>
    <property type="resolution" value="2.56 A"/>
    <property type="chains" value="A/B/C/D/E/F/G/H=1-50"/>
</dbReference>
<dbReference type="PDBsum" id="3OF1"/>
<dbReference type="PDBsum" id="6XQK"/>
<dbReference type="SMR" id="P07278"/>
<dbReference type="BioGRID" id="34957">
    <property type="interactions" value="386"/>
</dbReference>
<dbReference type="ComplexPortal" id="CPX-536">
    <property type="entry name" value="cAMP-dependent protein kinase complex variant 1"/>
</dbReference>
<dbReference type="ComplexPortal" id="CPX-537">
    <property type="entry name" value="cAMP-dependent protein kinase complex variant 2"/>
</dbReference>
<dbReference type="ComplexPortal" id="CPX-571">
    <property type="entry name" value="cAMP-dependent protein kinase complex variant 3"/>
</dbReference>
<dbReference type="ComplexPortal" id="CPX-572">
    <property type="entry name" value="cAMP-dependent protein kinase complex variant 4"/>
</dbReference>
<dbReference type="ComplexPortal" id="CPX-573">
    <property type="entry name" value="cAMP-dependent protein kinase complex variant 5"/>
</dbReference>
<dbReference type="ComplexPortal" id="CPX-574">
    <property type="entry name" value="cAMP-dependent protein kinase complex variant 6"/>
</dbReference>
<dbReference type="DIP" id="DIP-551N"/>
<dbReference type="FunCoup" id="P07278">
    <property type="interactions" value="547"/>
</dbReference>
<dbReference type="IntAct" id="P07278">
    <property type="interactions" value="27"/>
</dbReference>
<dbReference type="MINT" id="P07278"/>
<dbReference type="STRING" id="4932.YIL033C"/>
<dbReference type="iPTMnet" id="P07278"/>
<dbReference type="PaxDb" id="4932-YIL033C"/>
<dbReference type="PeptideAtlas" id="P07278"/>
<dbReference type="TopDownProteomics" id="P07278"/>
<dbReference type="EnsemblFungi" id="YIL033C_mRNA">
    <property type="protein sequence ID" value="YIL033C"/>
    <property type="gene ID" value="YIL033C"/>
</dbReference>
<dbReference type="GeneID" id="854778"/>
<dbReference type="KEGG" id="sce:YIL033C"/>
<dbReference type="AGR" id="SGD:S000001295"/>
<dbReference type="SGD" id="S000001295">
    <property type="gene designation" value="BCY1"/>
</dbReference>
<dbReference type="VEuPathDB" id="FungiDB:YIL033C"/>
<dbReference type="eggNOG" id="KOG1113">
    <property type="taxonomic scope" value="Eukaryota"/>
</dbReference>
<dbReference type="GeneTree" id="ENSGT00940000168302"/>
<dbReference type="HOGENOM" id="CLU_018310_0_1_1"/>
<dbReference type="InParanoid" id="P07278"/>
<dbReference type="OMA" id="SQTRCVG"/>
<dbReference type="OrthoDB" id="417078at2759"/>
<dbReference type="BioCyc" id="YEAST:G3O-31305-MONOMER"/>
<dbReference type="Reactome" id="R-SCE-163615">
    <property type="pathway name" value="PKA activation"/>
</dbReference>
<dbReference type="Reactome" id="R-SCE-164378">
    <property type="pathway name" value="PKA activation in glucagon signalling"/>
</dbReference>
<dbReference type="Reactome" id="R-SCE-180024">
    <property type="pathway name" value="DARPP-32 events"/>
</dbReference>
<dbReference type="Reactome" id="R-SCE-432040">
    <property type="pathway name" value="Vasopressin regulates renal water homeostasis via Aquaporins"/>
</dbReference>
<dbReference type="Reactome" id="R-SCE-442720">
    <property type="pathway name" value="CREB1 phosphorylation through the activation of Adenylate Cyclase"/>
</dbReference>
<dbReference type="Reactome" id="R-SCE-5610787">
    <property type="pathway name" value="Hedgehog 'off' state"/>
</dbReference>
<dbReference type="Reactome" id="R-SCE-9634597">
    <property type="pathway name" value="GPER1 signaling"/>
</dbReference>
<dbReference type="Reactome" id="R-SCE-983231">
    <property type="pathway name" value="Factors involved in megakaryocyte development and platelet production"/>
</dbReference>
<dbReference type="Reactome" id="R-SCE-9856530">
    <property type="pathway name" value="High laminar flow shear stress activates signaling by PIEZO1 and PECAM1:CDH5:KDR in endothelial cells"/>
</dbReference>
<dbReference type="BioGRID-ORCS" id="854778">
    <property type="hits" value="6 hits in 10 CRISPR screens"/>
</dbReference>
<dbReference type="ChiTaRS" id="REG1">
    <property type="organism name" value="yeast"/>
</dbReference>
<dbReference type="EvolutionaryTrace" id="P07278"/>
<dbReference type="PRO" id="PR:P07278"/>
<dbReference type="Proteomes" id="UP000002311">
    <property type="component" value="Chromosome IX"/>
</dbReference>
<dbReference type="RNAct" id="P07278">
    <property type="molecule type" value="protein"/>
</dbReference>
<dbReference type="GO" id="GO:0005952">
    <property type="term" value="C:cAMP-dependent protein kinase complex"/>
    <property type="evidence" value="ECO:0000318"/>
    <property type="project" value="GO_Central"/>
</dbReference>
<dbReference type="GO" id="GO:0000785">
    <property type="term" value="C:chromatin"/>
    <property type="evidence" value="ECO:0000314"/>
    <property type="project" value="SGD"/>
</dbReference>
<dbReference type="GO" id="GO:0005737">
    <property type="term" value="C:cytoplasm"/>
    <property type="evidence" value="ECO:0000314"/>
    <property type="project" value="SGD"/>
</dbReference>
<dbReference type="GO" id="GO:0005829">
    <property type="term" value="C:cytosol"/>
    <property type="evidence" value="ECO:0000318"/>
    <property type="project" value="GO_Central"/>
</dbReference>
<dbReference type="GO" id="GO:0005634">
    <property type="term" value="C:nucleus"/>
    <property type="evidence" value="ECO:0000314"/>
    <property type="project" value="SGD"/>
</dbReference>
<dbReference type="GO" id="GO:0005886">
    <property type="term" value="C:plasma membrane"/>
    <property type="evidence" value="ECO:0000314"/>
    <property type="project" value="SGD"/>
</dbReference>
<dbReference type="GO" id="GO:0030552">
    <property type="term" value="F:cAMP binding"/>
    <property type="evidence" value="ECO:0000318"/>
    <property type="project" value="GO_Central"/>
</dbReference>
<dbReference type="GO" id="GO:0004862">
    <property type="term" value="F:cAMP-dependent protein kinase inhibitor activity"/>
    <property type="evidence" value="ECO:0000314"/>
    <property type="project" value="SGD"/>
</dbReference>
<dbReference type="GO" id="GO:0042802">
    <property type="term" value="F:identical protein binding"/>
    <property type="evidence" value="ECO:0000353"/>
    <property type="project" value="IntAct"/>
</dbReference>
<dbReference type="GO" id="GO:0034236">
    <property type="term" value="F:protein kinase A catalytic subunit binding"/>
    <property type="evidence" value="ECO:0000318"/>
    <property type="project" value="GO_Central"/>
</dbReference>
<dbReference type="GO" id="GO:0007189">
    <property type="term" value="P:adenylate cyclase-activating G protein-coupled receptor signaling pathway"/>
    <property type="evidence" value="ECO:0000318"/>
    <property type="project" value="GO_Central"/>
</dbReference>
<dbReference type="GO" id="GO:0042149">
    <property type="term" value="P:cellular response to glucose starvation"/>
    <property type="evidence" value="ECO:0000315"/>
    <property type="project" value="SGD"/>
</dbReference>
<dbReference type="GO" id="GO:0006995">
    <property type="term" value="P:cellular response to nitrogen starvation"/>
    <property type="evidence" value="ECO:0000315"/>
    <property type="project" value="SGD"/>
</dbReference>
<dbReference type="GO" id="GO:0046580">
    <property type="term" value="P:negative regulation of Ras protein signal transduction"/>
    <property type="evidence" value="ECO:0000314"/>
    <property type="project" value="SGD"/>
</dbReference>
<dbReference type="GO" id="GO:0045944">
    <property type="term" value="P:positive regulation of transcription by RNA polymerase II"/>
    <property type="evidence" value="ECO:0000315"/>
    <property type="project" value="SGD"/>
</dbReference>
<dbReference type="GO" id="GO:0097271">
    <property type="term" value="P:protein localization to bud neck"/>
    <property type="evidence" value="ECO:0000316"/>
    <property type="project" value="SGD"/>
</dbReference>
<dbReference type="GO" id="GO:0010603">
    <property type="term" value="P:regulation of cytoplasmic mRNA processing body assembly"/>
    <property type="evidence" value="ECO:0000315"/>
    <property type="project" value="SGD"/>
</dbReference>
<dbReference type="CDD" id="cd00038">
    <property type="entry name" value="CAP_ED"/>
    <property type="match status" value="2"/>
</dbReference>
<dbReference type="CDD" id="cd12098">
    <property type="entry name" value="DD_R_ScPKA-like"/>
    <property type="match status" value="1"/>
</dbReference>
<dbReference type="FunFam" id="2.60.120.10:FF:000039">
    <property type="entry name" value="cAMP-dependent protein kinase regulatory subunit"/>
    <property type="match status" value="1"/>
</dbReference>
<dbReference type="FunFam" id="2.60.120.10:FF:000118">
    <property type="entry name" value="cAMP-dependent protein kinase regulatory subunit"/>
    <property type="match status" value="1"/>
</dbReference>
<dbReference type="Gene3D" id="2.60.120.10">
    <property type="entry name" value="Jelly Rolls"/>
    <property type="match status" value="2"/>
</dbReference>
<dbReference type="InterPro" id="IPR050503">
    <property type="entry name" value="cAMP-dep_PK_reg_su-like"/>
</dbReference>
<dbReference type="InterPro" id="IPR012198">
    <property type="entry name" value="cAMP_dep_PK_reg_su"/>
</dbReference>
<dbReference type="InterPro" id="IPR003117">
    <property type="entry name" value="cAMP_dep_PK_reg_su_I/II_a/b"/>
</dbReference>
<dbReference type="InterPro" id="IPR018488">
    <property type="entry name" value="cNMP-bd_CS"/>
</dbReference>
<dbReference type="InterPro" id="IPR000595">
    <property type="entry name" value="cNMP-bd_dom"/>
</dbReference>
<dbReference type="InterPro" id="IPR018490">
    <property type="entry name" value="cNMP-bd_dom_sf"/>
</dbReference>
<dbReference type="InterPro" id="IPR014710">
    <property type="entry name" value="RmlC-like_jellyroll"/>
</dbReference>
<dbReference type="PANTHER" id="PTHR11635">
    <property type="entry name" value="CAMP-DEPENDENT PROTEIN KINASE REGULATORY CHAIN"/>
    <property type="match status" value="1"/>
</dbReference>
<dbReference type="PANTHER" id="PTHR11635:SF152">
    <property type="entry name" value="CAMP-DEPENDENT PROTEIN KINASE TYPE I REGULATORY SUBUNIT-RELATED"/>
    <property type="match status" value="1"/>
</dbReference>
<dbReference type="Pfam" id="PF00027">
    <property type="entry name" value="cNMP_binding"/>
    <property type="match status" value="2"/>
</dbReference>
<dbReference type="Pfam" id="PF02197">
    <property type="entry name" value="RIIa"/>
    <property type="match status" value="1"/>
</dbReference>
<dbReference type="PIRSF" id="PIRSF000548">
    <property type="entry name" value="PK_regulatory"/>
    <property type="match status" value="1"/>
</dbReference>
<dbReference type="PRINTS" id="PR00103">
    <property type="entry name" value="CAMPKINASE"/>
</dbReference>
<dbReference type="SMART" id="SM00100">
    <property type="entry name" value="cNMP"/>
    <property type="match status" value="2"/>
</dbReference>
<dbReference type="SMART" id="SM00394">
    <property type="entry name" value="RIIa"/>
    <property type="match status" value="1"/>
</dbReference>
<dbReference type="SUPFAM" id="SSF51206">
    <property type="entry name" value="cAMP-binding domain-like"/>
    <property type="match status" value="2"/>
</dbReference>
<dbReference type="PROSITE" id="PS00888">
    <property type="entry name" value="CNMP_BINDING_1"/>
    <property type="match status" value="2"/>
</dbReference>
<dbReference type="PROSITE" id="PS00889">
    <property type="entry name" value="CNMP_BINDING_2"/>
    <property type="match status" value="2"/>
</dbReference>
<dbReference type="PROSITE" id="PS50042">
    <property type="entry name" value="CNMP_BINDING_3"/>
    <property type="match status" value="2"/>
</dbReference>
<evidence type="ECO:0000256" key="1">
    <source>
        <dbReference type="SAM" id="MobiDB-lite"/>
    </source>
</evidence>
<evidence type="ECO:0000269" key="2">
    <source>
    </source>
</evidence>
<evidence type="ECO:0000269" key="3">
    <source>
    </source>
</evidence>
<evidence type="ECO:0000269" key="4">
    <source>
    </source>
</evidence>
<evidence type="ECO:0000269" key="5">
    <source>
    </source>
</evidence>
<evidence type="ECO:0000269" key="6">
    <source>
    </source>
</evidence>
<evidence type="ECO:0000269" key="7">
    <source>
    </source>
</evidence>
<evidence type="ECO:0000269" key="8">
    <source>
    </source>
</evidence>
<evidence type="ECO:0000269" key="9">
    <source>
    </source>
</evidence>
<evidence type="ECO:0000269" key="10">
    <source>
    </source>
</evidence>
<evidence type="ECO:0000305" key="11"/>
<evidence type="ECO:0007744" key="12">
    <source>
    </source>
</evidence>
<evidence type="ECO:0007744" key="13">
    <source>
    </source>
</evidence>
<evidence type="ECO:0007829" key="14">
    <source>
        <dbReference type="PDB" id="3OF1"/>
    </source>
</evidence>
<evidence type="ECO:0007829" key="15">
    <source>
        <dbReference type="PDB" id="6XQK"/>
    </source>
</evidence>
<sequence length="416" mass="47219">MVSSLPKESQAELQLFQNEINAANPSDFLQFSANYFNKRLEQQRAFLKAREPEFKAKNIVLFPEPEESFSRPQSAQSQSRSRSSVMFKSPFVNEDPHSNVFKSGFNLDPHEQDTHQQAQEEQQHTREKTSTPPLPMHFNAQRRTSVSGETLQPNNFDDWTPDHYKEKSEQQLQRLEKSIRNNFLFNKLDSDSKRLVINCLEEKSVPKGATIIKQGDQGDYFYVVEKGTVDFYVNDNKVNSSGPGSSFGELALMYNSPRAATVVATSDCLLWALDRLTFRKILLGSSFKKRLMYDDLLKSMPVLKSLTTYDRAKLADALDTKIYQPGETIIREGDQGENFYLIEYGAVDVSKKGQGVINKLKDHDYFGEVALLNDLPRQATVTATKRTKVATLGKSGFQRLLGPAVDVLKLNDPTRH</sequence>
<organism>
    <name type="scientific">Saccharomyces cerevisiae (strain ATCC 204508 / S288c)</name>
    <name type="common">Baker's yeast</name>
    <dbReference type="NCBI Taxonomy" id="559292"/>
    <lineage>
        <taxon>Eukaryota</taxon>
        <taxon>Fungi</taxon>
        <taxon>Dikarya</taxon>
        <taxon>Ascomycota</taxon>
        <taxon>Saccharomycotina</taxon>
        <taxon>Saccharomycetes</taxon>
        <taxon>Saccharomycetales</taxon>
        <taxon>Saccharomycetaceae</taxon>
        <taxon>Saccharomyces</taxon>
    </lineage>
</organism>
<gene>
    <name type="primary">BCY1</name>
    <name type="synonym">REG1</name>
    <name type="synonym">SRA1</name>
    <name type="ordered locus">YIL033C</name>
</gene>
<accession>P07278</accession>
<accession>D6VVP9</accession>
<comment type="function">
    <text evidence="3 8 9 10">Regulatory subunit of the cyclic AMP-dependent protein kinase (PKA), an effector of the Ras/cAMP pathway. Inhibits PKA activity in the absence of cAMP. cAMP activates PKA and promotes growth and proliferation in response to good nutrient conditions. Together with ZDS1, provides a negative feedback control on the cell wall integrity-signaling pathway by acting as a negative regulator of MAP kinase SLT2/MPK1.</text>
</comment>
<comment type="subunit">
    <text evidence="7 9">The inactive holoenzyme of cAMP-dependent protein kinase is a tetramer, composed of 2 regulatory subunits (R, encoded by BCY1) and two catalytic subunits (C, encoded by the 3 partially redundant TPK1, TPK2, and TPK3 genes). Activation by cAMP causes dissociation of the holoenzyme, producing 2 active catalytic monomers C and a regulatory dimer R(2).</text>
</comment>
<comment type="interaction">
    <interactant intactId="EBI-9475">
        <id>P07278</id>
    </interactant>
    <interactant intactId="EBI-9475">
        <id>P07278</id>
        <label>BCY1</label>
    </interactant>
    <organismsDiffer>false</organismsDiffer>
    <experiments>3</experiments>
</comment>
<comment type="interaction">
    <interactant intactId="EBI-9475">
        <id>P07278</id>
    </interactant>
    <interactant intactId="EBI-6679">
        <id>P22696</id>
        <label>ESS1</label>
    </interactant>
    <organismsDiffer>false</organismsDiffer>
    <experiments>2</experiments>
</comment>
<comment type="interaction">
    <interactant intactId="EBI-9475">
        <id>P07278</id>
    </interactant>
    <interactant intactId="EBI-9458">
        <id>P06244</id>
        <label>TPK1</label>
    </interactant>
    <organismsDiffer>false</organismsDiffer>
    <experiments>8</experiments>
</comment>
<comment type="interaction">
    <interactant intactId="EBI-9475">
        <id>P07278</id>
    </interactant>
    <interactant intactId="EBI-9465">
        <id>P06245</id>
        <label>TPK2</label>
    </interactant>
    <organismsDiffer>false</organismsDiffer>
    <experiments>7</experiments>
</comment>
<comment type="interaction">
    <interactant intactId="EBI-9475">
        <id>P07278</id>
    </interactant>
    <interactant intactId="EBI-9470">
        <id>P05986</id>
        <label>TPK3</label>
    </interactant>
    <organismsDiffer>false</organismsDiffer>
    <experiments>5</experiments>
</comment>
<comment type="subcellular location">
    <subcellularLocation>
        <location>Cytoplasm</location>
    </subcellularLocation>
    <subcellularLocation>
        <location>Nucleus</location>
    </subcellularLocation>
    <text>Cytoplasmic when phosphorylated. Nuclear when not phosphorylated.</text>
</comment>
<comment type="domain">
    <text>The inhibitor sequence (IS) is a substrate recognition motif that docks to the active site cleft of the catalytic subunit rendering the holoenzyme inactive.</text>
</comment>
<comment type="domain">
    <text>Binding of cAMP to the 2 tandem cyclic-nucleotide binding domains (CNB-A and CNB-B) induces a conformational change in BCY1, causing the interaction surface with the catalytic subunit to be destroyed and eventually the dissociation of the R dimer from the C subunits.</text>
</comment>
<comment type="PTM">
    <text evidence="2 3 6">Phosphorylated by YAK1 in response to glucose starvation. Phosphorylated by MCK1 at Thr-129 upon TOR complex 1 (TORC1) inhibition. Thr-129 phosphorylation activates BCY1 to inhibit PKA. TORC1 inhibits phosphorylation of RxxS/T sites but has no effect on Ser-145 phosphorylation. The phosphorylation sites can be clustered in several groups, all localized in the N-terminal part. The first cluster termed cluster I (CI) is located close to the N-terminus and includes Ser-3, Ser-4 and Ser-9 (PubMed:11134339, PubMed:12704202). The second includes Ser-68, Ser-70, Ser-74, Ser-77, Ser-79, Ser-81, Ser-83, and Ser-84. This cluster of phosphorylation sites, termed cluster II (CII), is important for BCY1 cytoplasmic localization and function (PubMed:11134339, PubMed:12704202, PubMed:20702584). The third cluster of phosphorylated residues consists of Thr-144, Ser-145, Ser-147, Thr-150, and Thr-160. This cluster falls within or near the so-called autoinhibitory domain where the catalytic subunit of PKA autophosphorylates the highly conserved Ser-145 to inhibit BCY1 (PubMed:20702584). A last cluster of phosphorylated residues included Thr-129, Ser-130, and Thr-131 and is termed cluster III (CIII). Sites in CIII (and to a lesser extent in CII) are hyperphosphorylated in response to rapamycin (PubMed:20702584).</text>
</comment>
<comment type="miscellaneous">
    <text evidence="5">Present with 4280 molecules/cell in log phase SD medium.</text>
</comment>
<comment type="similarity">
    <text evidence="11">Belongs to the cAMP-dependent kinase regulatory chain family.</text>
</comment>
<protein>
    <recommendedName>
        <fullName>cAMP-dependent protein kinase regulatory subunit</fullName>
        <shortName>cAPK regulatory subunit</shortName>
    </recommendedName>
    <alternativeName>
        <fullName>Bypass of cyclase mutations protein 1</fullName>
    </alternativeName>
    <alternativeName>
        <fullName>Protein kinase A regulatory subunit</fullName>
        <shortName>PKA regulatory subunit</shortName>
    </alternativeName>
</protein>
<reference key="1">
    <citation type="journal article" date="1987" name="Mol. Cell. Biol.">
        <title>Cloning and characterization of BCY1, a locus encoding a regulatory subunit of the cyclic AMP-dependent protein kinase in Saccharomyces cerevisiae.</title>
        <authorList>
            <person name="Toda T."/>
            <person name="Cameron S."/>
            <person name="Sass P."/>
            <person name="Zoller M."/>
            <person name="Scott J.D."/>
            <person name="McMullen B."/>
            <person name="Hurwitz M."/>
            <person name="Krebs E.G."/>
            <person name="Wigler M."/>
        </authorList>
    </citation>
    <scope>NUCLEOTIDE SEQUENCE [GENOMIC DNA]</scope>
    <scope>PROTEIN SEQUENCE OF 2-80; 83-126; 139-177; 195-203; 227-275; 291-298; 310-340; 345-377 AND 387-399</scope>
    <scope>FUNCTION</scope>
    <scope>SUBUNIT</scope>
</reference>
<reference key="2">
    <citation type="journal article" date="1987" name="Mol. Cell. Biol.">
        <title>Characterization of Saccharomyces cerevisiae genes encoding subunits of cyclic AMP-dependent protein kinase.</title>
        <authorList>
            <person name="Cannon J.F."/>
            <person name="Tatchell K."/>
        </authorList>
    </citation>
    <scope>NUCLEOTIDE SEQUENCE [GENOMIC DNA]</scope>
    <scope>FUNCTION</scope>
</reference>
<reference key="3">
    <citation type="journal article" date="1987" name="Nucleic Acids Res.">
        <title>Complete nucleotide sequence of the gene encoding the regulatory subunit of 3',5'-cyclic AMP-dependent protein kinase from the yeast Saccharomyces cerevisiae.</title>
        <authorList>
            <person name="Kunisawa R."/>
            <person name="Davis T.N."/>
            <person name="Urdea M.S."/>
            <person name="Thorner J."/>
        </authorList>
    </citation>
    <scope>NUCLEOTIDE SEQUENCE [GENOMIC DNA]</scope>
</reference>
<reference key="4">
    <citation type="journal article" date="1997" name="Nature">
        <title>The nucleotide sequence of Saccharomyces cerevisiae chromosome IX.</title>
        <authorList>
            <person name="Churcher C.M."/>
            <person name="Bowman S."/>
            <person name="Badcock K."/>
            <person name="Bankier A.T."/>
            <person name="Brown D."/>
            <person name="Chillingworth T."/>
            <person name="Connor R."/>
            <person name="Devlin K."/>
            <person name="Gentles S."/>
            <person name="Hamlin N."/>
            <person name="Harris D.E."/>
            <person name="Horsnell T."/>
            <person name="Hunt S."/>
            <person name="Jagels K."/>
            <person name="Jones M."/>
            <person name="Lye G."/>
            <person name="Moule S."/>
            <person name="Odell C."/>
            <person name="Pearson D."/>
            <person name="Rajandream M.A."/>
            <person name="Rice P."/>
            <person name="Rowley N."/>
            <person name="Skelton J."/>
            <person name="Smith V."/>
            <person name="Walsh S.V."/>
            <person name="Whitehead S."/>
            <person name="Barrell B.G."/>
        </authorList>
    </citation>
    <scope>NUCLEOTIDE SEQUENCE [LARGE SCALE GENOMIC DNA]</scope>
    <source>
        <strain>ATCC 204508 / S288c</strain>
    </source>
</reference>
<reference key="5">
    <citation type="journal article" date="2014" name="G3 (Bethesda)">
        <title>The reference genome sequence of Saccharomyces cerevisiae: Then and now.</title>
        <authorList>
            <person name="Engel S.R."/>
            <person name="Dietrich F.S."/>
            <person name="Fisk D.G."/>
            <person name="Binkley G."/>
            <person name="Balakrishnan R."/>
            <person name="Costanzo M.C."/>
            <person name="Dwight S.S."/>
            <person name="Hitz B.C."/>
            <person name="Karra K."/>
            <person name="Nash R.S."/>
            <person name="Weng S."/>
            <person name="Wong E.D."/>
            <person name="Lloyd P."/>
            <person name="Skrzypek M.S."/>
            <person name="Miyasato S.R."/>
            <person name="Simison M."/>
            <person name="Cherry J.M."/>
        </authorList>
    </citation>
    <scope>GENOME REANNOTATION</scope>
    <source>
        <strain>ATCC 204508 / S288c</strain>
    </source>
</reference>
<reference key="6">
    <citation type="journal article" date="2007" name="Genome Res.">
        <title>Approaching a complete repository of sequence-verified protein-encoding clones for Saccharomyces cerevisiae.</title>
        <authorList>
            <person name="Hu Y."/>
            <person name="Rolfs A."/>
            <person name="Bhullar B."/>
            <person name="Murthy T.V.S."/>
            <person name="Zhu C."/>
            <person name="Berger M.F."/>
            <person name="Camargo A.A."/>
            <person name="Kelley F."/>
            <person name="McCarron S."/>
            <person name="Jepson D."/>
            <person name="Richardson A."/>
            <person name="Raphael J."/>
            <person name="Moreira D."/>
            <person name="Taycher E."/>
            <person name="Zuo D."/>
            <person name="Mohr S."/>
            <person name="Kane M.F."/>
            <person name="Williamson J."/>
            <person name="Simpson A.J.G."/>
            <person name="Bulyk M.L."/>
            <person name="Harlow E."/>
            <person name="Marsischky G."/>
            <person name="Kolodner R.D."/>
            <person name="LaBaer J."/>
        </authorList>
    </citation>
    <scope>NUCLEOTIDE SEQUENCE [GENOMIC DNA]</scope>
    <source>
        <strain>ATCC 204508 / S288c</strain>
    </source>
</reference>
<reference key="7">
    <citation type="journal article" date="1980" name="J. Biol. Chem.">
        <title>Characterization of a cyclic AMP-binding protein from bakers' yeast. Identification as a regulatory subunit of cyclic AMP-dependent protein kinase.</title>
        <authorList>
            <person name="Hixson C.S."/>
            <person name="Krebs E.G."/>
        </authorList>
    </citation>
    <scope>PROTEIN SEQUENCE OF 2-21</scope>
    <scope>FUNCTION</scope>
</reference>
<reference key="8">
    <citation type="journal article" date="1992" name="Cell">
        <title>Translation initiation requires the PAB-dependent poly(A) ribonuclease in yeast.</title>
        <authorList>
            <person name="Sachs A.B."/>
            <person name="Deardorff J.A."/>
        </authorList>
    </citation>
    <scope>PROTEIN SEQUENCE OF 2-19</scope>
</reference>
<reference key="9">
    <citation type="journal article" date="2001" name="Mol. Cell. Biol.">
        <title>Nucleocytoplasmic distribution of budding yeast protein kinase A regulatory subunit Bcy1 requires Zds1 and is regulated by Yak1-dependent phosphorylation of its targeting domain.</title>
        <authorList>
            <person name="Griffioen G."/>
            <person name="Branduardi P."/>
            <person name="Ballarini A."/>
            <person name="Anghileri P."/>
            <person name="Norbeck J."/>
            <person name="Baroni M.D."/>
            <person name="Ruis H."/>
        </authorList>
    </citation>
    <scope>PHOSPHORYLATION</scope>
    <scope>SUBCELLULAR LOCATION</scope>
</reference>
<reference key="10">
    <citation type="journal article" date="2003" name="J. Biol. Chem.">
        <title>Feedback inhibition on cell wall integrity signaling by Zds1 involves Gsk3 phosphorylation of a cAMP-dependent protein kinase regulatory subunit.</title>
        <authorList>
            <person name="Griffioen G."/>
            <person name="Swinnen S."/>
            <person name="Thevelein J.M."/>
        </authorList>
    </citation>
    <scope>FUNCTION</scope>
    <scope>SUBCELLULAR LOCATION</scope>
    <scope>PHOSPHORYLATION</scope>
</reference>
<reference key="11">
    <citation type="journal article" date="2003" name="Nature">
        <title>Global analysis of protein localization in budding yeast.</title>
        <authorList>
            <person name="Huh W.-K."/>
            <person name="Falvo J.V."/>
            <person name="Gerke L.C."/>
            <person name="Carroll A.S."/>
            <person name="Howson R.W."/>
            <person name="Weissman J.S."/>
            <person name="O'Shea E.K."/>
        </authorList>
    </citation>
    <scope>SUBCELLULAR LOCATION [LARGE SCALE ANALYSIS]</scope>
</reference>
<reference key="12">
    <citation type="journal article" date="2003" name="Nature">
        <title>Global analysis of protein expression in yeast.</title>
        <authorList>
            <person name="Ghaemmaghami S."/>
            <person name="Huh W.-K."/>
            <person name="Bower K."/>
            <person name="Howson R.W."/>
            <person name="Belle A."/>
            <person name="Dephoure N."/>
            <person name="O'Shea E.K."/>
            <person name="Weissman J.S."/>
        </authorList>
    </citation>
    <scope>LEVEL OF PROTEIN EXPRESSION [LARGE SCALE ANALYSIS]</scope>
</reference>
<reference key="13">
    <citation type="journal article" date="2007" name="J. Proteome Res.">
        <title>Large-scale phosphorylation analysis of alpha-factor-arrested Saccharomyces cerevisiae.</title>
        <authorList>
            <person name="Li X."/>
            <person name="Gerber S.A."/>
            <person name="Rudner A.D."/>
            <person name="Beausoleil S.A."/>
            <person name="Haas W."/>
            <person name="Villen J."/>
            <person name="Elias J.E."/>
            <person name="Gygi S.P."/>
        </authorList>
    </citation>
    <scope>IDENTIFICATION BY MASS SPECTROMETRY [LARGE SCALE ANALYSIS]</scope>
    <source>
        <strain>ADR376</strain>
    </source>
</reference>
<reference key="14">
    <citation type="journal article" date="2007" name="Proc. Natl. Acad. Sci. U.S.A.">
        <title>Analysis of phosphorylation sites on proteins from Saccharomyces cerevisiae by electron transfer dissociation (ETD) mass spectrometry.</title>
        <authorList>
            <person name="Chi A."/>
            <person name="Huttenhower C."/>
            <person name="Geer L.Y."/>
            <person name="Coon J.J."/>
            <person name="Syka J.E.P."/>
            <person name="Bai D.L."/>
            <person name="Shabanowitz J."/>
            <person name="Burke D.J."/>
            <person name="Troyanskaya O.G."/>
            <person name="Hunt D.F."/>
        </authorList>
    </citation>
    <scope>IDENTIFICATION BY MASS SPECTROMETRY [LARGE SCALE ANALYSIS]</scope>
</reference>
<reference key="15">
    <citation type="journal article" date="2008" name="Mol. Cell. Proteomics">
        <title>A multidimensional chromatography technology for in-depth phosphoproteome analysis.</title>
        <authorList>
            <person name="Albuquerque C.P."/>
            <person name="Smolka M.B."/>
            <person name="Payne S.H."/>
            <person name="Bafna V."/>
            <person name="Eng J."/>
            <person name="Zhou H."/>
        </authorList>
    </citation>
    <scope>PHOSPHORYLATION [LARGE SCALE ANALYSIS] AT SER-145</scope>
    <scope>IDENTIFICATION BY MASS SPECTROMETRY [LARGE SCALE ANALYSIS]</scope>
</reference>
<reference key="16">
    <citation type="journal article" date="2009" name="Science">
        <title>Global analysis of Cdk1 substrate phosphorylation sites provides insights into evolution.</title>
        <authorList>
            <person name="Holt L.J."/>
            <person name="Tuch B.B."/>
            <person name="Villen J."/>
            <person name="Johnson A.D."/>
            <person name="Gygi S.P."/>
            <person name="Morgan D.O."/>
        </authorList>
    </citation>
    <scope>PHOSPHORYLATION [LARGE SCALE ANALYSIS] AT SER-83; SER-145 AND THR-150</scope>
    <scope>IDENTIFICATION BY MASS SPECTROMETRY [LARGE SCALE ANALYSIS]</scope>
</reference>
<reference key="17">
    <citation type="journal article" date="2010" name="Mol. Biol. Cell">
        <title>The rapamycin-sensitive phosphoproteome reveals that TOR controls protein kinase A toward some but not all substrates.</title>
        <authorList>
            <person name="Soulard A."/>
            <person name="Cremonesi A."/>
            <person name="Moes S."/>
            <person name="Schutz F."/>
            <person name="Jeno P."/>
            <person name="Hall M.N."/>
        </authorList>
    </citation>
    <scope>PHOSPHORYLATION AT SER-68; SER-70; SER-74; SER-77; SER-79; SER-81; SER-83; SER-84; THR-129; SER-130; THR-131; THR-144; SER-145; SER-147; THR-150 AND THR-160</scope>
    <scope>MUTAGENESIS OF THR-129</scope>
</reference>
<reference key="18">
    <citation type="journal article" date="2010" name="Structure">
        <title>Structure of yeast regulatory subunit: a glimpse into the evolution of PKA signaling.</title>
        <authorList>
            <person name="Rinaldi J."/>
            <person name="Wu J."/>
            <person name="Yang J."/>
            <person name="Ralston C.Y."/>
            <person name="Sankaran B."/>
            <person name="Moreno S."/>
            <person name="Taylor S.S."/>
        </authorList>
    </citation>
    <scope>X-RAY CRYSTALLOGRAPHY (2.21 ANGSTROMS) OF 171-416 IN COMPLEX WITH CAMP</scope>
</reference>
<feature type="initiator methionine" description="Removed" evidence="4 9 10">
    <location>
        <position position="1"/>
    </location>
</feature>
<feature type="chain" id="PRO_0000205418" description="cAMP-dependent protein kinase regulatory subunit">
    <location>
        <begin position="2"/>
        <end position="416"/>
    </location>
</feature>
<feature type="region of interest" description="Dimerization and phosphorylation">
    <location>
        <begin position="2"/>
        <end position="183"/>
    </location>
</feature>
<feature type="region of interest" description="Dimerization/docking domain (D/D)">
    <location>
        <begin position="8"/>
        <end position="45"/>
    </location>
</feature>
<feature type="region of interest" description="Disordered" evidence="1">
    <location>
        <begin position="65"/>
        <end position="138"/>
    </location>
</feature>
<feature type="short sequence motif" description="Inhibitor sequence (IS)">
    <location>
        <begin position="142"/>
        <end position="146"/>
    </location>
</feature>
<feature type="compositionally biased region" description="Low complexity" evidence="1">
    <location>
        <begin position="70"/>
        <end position="84"/>
    </location>
</feature>
<feature type="binding site" evidence="7">
    <location>
        <begin position="184"/>
        <end position="301"/>
    </location>
    <ligand>
        <name>3',5'-cyclic AMP</name>
        <dbReference type="ChEBI" id="CHEBI:58165"/>
        <label>1</label>
    </ligand>
</feature>
<feature type="binding site" evidence="7">
    <location>
        <position position="249"/>
    </location>
    <ligand>
        <name>3',5'-cyclic AMP</name>
        <dbReference type="ChEBI" id="CHEBI:58165"/>
        <label>1</label>
    </ligand>
</feature>
<feature type="binding site" evidence="7">
    <location>
        <position position="258"/>
    </location>
    <ligand>
        <name>3',5'-cyclic AMP</name>
        <dbReference type="ChEBI" id="CHEBI:58165"/>
        <label>1</label>
    </ligand>
</feature>
<feature type="binding site" evidence="7">
    <location>
        <begin position="302"/>
        <end position="416"/>
    </location>
    <ligand>
        <name>3',5'-cyclic AMP</name>
        <dbReference type="ChEBI" id="CHEBI:58165"/>
        <label>2</label>
    </ligand>
</feature>
<feature type="binding site" evidence="7">
    <location>
        <position position="368"/>
    </location>
    <ligand>
        <name>3',5'-cyclic AMP</name>
        <dbReference type="ChEBI" id="CHEBI:58165"/>
        <label>2</label>
    </ligand>
</feature>
<feature type="binding site" evidence="7">
    <location>
        <position position="377"/>
    </location>
    <ligand>
        <name>3',5'-cyclic AMP</name>
        <dbReference type="ChEBI" id="CHEBI:58165"/>
        <label>2</label>
    </ligand>
</feature>
<feature type="modified residue" description="Phosphoserine" evidence="11">
    <location>
        <position position="3"/>
    </location>
</feature>
<feature type="modified residue" description="Phosphoserine" evidence="11">
    <location>
        <position position="4"/>
    </location>
</feature>
<feature type="modified residue" description="Phosphoserine" evidence="11">
    <location>
        <position position="9"/>
    </location>
</feature>
<feature type="modified residue" description="Phosphoserine" evidence="6">
    <location>
        <position position="68"/>
    </location>
</feature>
<feature type="modified residue" description="Phosphoserine" evidence="6">
    <location>
        <position position="70"/>
    </location>
</feature>
<feature type="modified residue" description="Phosphoserine" evidence="6">
    <location>
        <position position="74"/>
    </location>
</feature>
<feature type="modified residue" description="Phosphoserine" evidence="6">
    <location>
        <position position="77"/>
    </location>
</feature>
<feature type="modified residue" description="Phosphoserine" evidence="6">
    <location>
        <position position="79"/>
    </location>
</feature>
<feature type="modified residue" description="Phosphoserine" evidence="6">
    <location>
        <position position="81"/>
    </location>
</feature>
<feature type="modified residue" description="Phosphoserine" evidence="6 13">
    <location>
        <position position="83"/>
    </location>
</feature>
<feature type="modified residue" description="Phosphoserine" evidence="6">
    <location>
        <position position="84"/>
    </location>
</feature>
<feature type="modified residue" description="Phosphothreonine" evidence="6">
    <location>
        <position position="129"/>
    </location>
</feature>
<feature type="modified residue" description="Phosphoserine" evidence="6">
    <location>
        <position position="130"/>
    </location>
</feature>
<feature type="modified residue" description="Phosphothreonine" evidence="6">
    <location>
        <position position="131"/>
    </location>
</feature>
<feature type="modified residue" description="Phosphothreonine" evidence="6">
    <location>
        <position position="144"/>
    </location>
</feature>
<feature type="modified residue" description="Phosphoserine; by autocatalysis" evidence="6 9 12 13">
    <location>
        <position position="145"/>
    </location>
</feature>
<feature type="modified residue" description="Phosphoserine" evidence="6">
    <location>
        <position position="147"/>
    </location>
</feature>
<feature type="modified residue" description="Phosphothreonine" evidence="6 13">
    <location>
        <position position="150"/>
    </location>
</feature>
<feature type="modified residue" description="Phosphothreonine" evidence="6">
    <location>
        <position position="160"/>
    </location>
</feature>
<feature type="mutagenesis site" description="Confers increased sensitivity to rapamycin and enhanced accumulation of glycogen upon TORC1 inhibition." evidence="6">
    <original>T</original>
    <variation>D</variation>
    <location>
        <position position="129"/>
    </location>
</feature>
<feature type="sequence conflict" description="In Ref. 3; CAA28726." evidence="11" ref="3">
    <original>A</original>
    <variation>P</variation>
    <location>
        <position position="264"/>
    </location>
</feature>
<feature type="helix" evidence="15">
    <location>
        <begin position="7"/>
        <end position="23"/>
    </location>
</feature>
<feature type="helix" evidence="15">
    <location>
        <begin position="28"/>
        <end position="48"/>
    </location>
</feature>
<feature type="helix" evidence="14">
    <location>
        <begin position="173"/>
        <end position="180"/>
    </location>
</feature>
<feature type="turn" evidence="14">
    <location>
        <begin position="183"/>
        <end position="187"/>
    </location>
</feature>
<feature type="helix" evidence="14">
    <location>
        <begin position="190"/>
        <end position="197"/>
    </location>
</feature>
<feature type="strand" evidence="14">
    <location>
        <begin position="201"/>
        <end position="205"/>
    </location>
</feature>
<feature type="strand" evidence="14">
    <location>
        <begin position="210"/>
        <end position="212"/>
    </location>
</feature>
<feature type="strand" evidence="14">
    <location>
        <begin position="220"/>
        <end position="226"/>
    </location>
</feature>
<feature type="strand" evidence="14">
    <location>
        <begin position="229"/>
        <end position="233"/>
    </location>
</feature>
<feature type="strand" evidence="14">
    <location>
        <begin position="239"/>
        <end position="241"/>
    </location>
</feature>
<feature type="helix" evidence="14">
    <location>
        <begin position="249"/>
        <end position="254"/>
    </location>
</feature>
<feature type="strand" evidence="14">
    <location>
        <begin position="259"/>
        <end position="266"/>
    </location>
</feature>
<feature type="strand" evidence="14">
    <location>
        <begin position="268"/>
        <end position="274"/>
    </location>
</feature>
<feature type="helix" evidence="14">
    <location>
        <begin position="275"/>
        <end position="280"/>
    </location>
</feature>
<feature type="turn" evidence="14">
    <location>
        <begin position="281"/>
        <end position="286"/>
    </location>
</feature>
<feature type="helix" evidence="14">
    <location>
        <begin position="288"/>
        <end position="292"/>
    </location>
</feature>
<feature type="helix" evidence="14">
    <location>
        <begin position="294"/>
        <end position="299"/>
    </location>
</feature>
<feature type="helix" evidence="14">
    <location>
        <begin position="301"/>
        <end position="303"/>
    </location>
</feature>
<feature type="helix" evidence="14">
    <location>
        <begin position="308"/>
        <end position="316"/>
    </location>
</feature>
<feature type="strand" evidence="14">
    <location>
        <begin position="319"/>
        <end position="323"/>
    </location>
</feature>
<feature type="strand" evidence="14">
    <location>
        <begin position="328"/>
        <end position="330"/>
    </location>
</feature>
<feature type="strand" evidence="14">
    <location>
        <begin position="338"/>
        <end position="344"/>
    </location>
</feature>
<feature type="strand" evidence="14">
    <location>
        <begin position="346"/>
        <end position="351"/>
    </location>
</feature>
<feature type="turn" evidence="14">
    <location>
        <begin position="352"/>
        <end position="354"/>
    </location>
</feature>
<feature type="strand" evidence="14">
    <location>
        <begin position="355"/>
        <end position="361"/>
    </location>
</feature>
<feature type="helix" evidence="14">
    <location>
        <begin position="368"/>
        <end position="373"/>
    </location>
</feature>
<feature type="strand" evidence="14">
    <location>
        <begin position="378"/>
        <end position="385"/>
    </location>
</feature>
<feature type="strand" evidence="14">
    <location>
        <begin position="387"/>
        <end position="393"/>
    </location>
</feature>
<feature type="helix" evidence="14">
    <location>
        <begin position="394"/>
        <end position="400"/>
    </location>
</feature>
<feature type="turn" evidence="14">
    <location>
        <begin position="402"/>
        <end position="404"/>
    </location>
</feature>
<feature type="helix" evidence="14">
    <location>
        <begin position="405"/>
        <end position="410"/>
    </location>
</feature>
<keyword id="KW-0002">3D-structure</keyword>
<keyword id="KW-0114">cAMP</keyword>
<keyword id="KW-0116">cAMP-binding</keyword>
<keyword id="KW-0963">Cytoplasm</keyword>
<keyword id="KW-0903">Direct protein sequencing</keyword>
<keyword id="KW-0547">Nucleotide-binding</keyword>
<keyword id="KW-0539">Nucleus</keyword>
<keyword id="KW-0597">Phosphoprotein</keyword>
<keyword id="KW-1185">Reference proteome</keyword>
<keyword id="KW-0677">Repeat</keyword>